<feature type="chain" id="PRO_0000382996" description="Probable 4-amino-4-deoxy-L-arabinose-phosphoundecaprenol flippase subunit ArnE">
    <location>
        <begin position="1"/>
        <end position="111"/>
    </location>
</feature>
<feature type="transmembrane region" description="Helical" evidence="1">
    <location>
        <begin position="38"/>
        <end position="58"/>
    </location>
</feature>
<feature type="transmembrane region" description="Helical" evidence="1">
    <location>
        <begin position="61"/>
        <end position="81"/>
    </location>
</feature>
<feature type="transmembrane region" description="Helical" evidence="1">
    <location>
        <begin position="91"/>
        <end position="111"/>
    </location>
</feature>
<feature type="domain" description="EamA" evidence="1">
    <location>
        <begin position="40"/>
        <end position="109"/>
    </location>
</feature>
<accession>B4SYX4</accession>
<gene>
    <name evidence="1" type="primary">arnE</name>
    <name type="ordered locus">SNSL254_A2487</name>
</gene>
<reference key="1">
    <citation type="journal article" date="2011" name="J. Bacteriol.">
        <title>Comparative genomics of 28 Salmonella enterica isolates: evidence for CRISPR-mediated adaptive sublineage evolution.</title>
        <authorList>
            <person name="Fricke W.F."/>
            <person name="Mammel M.K."/>
            <person name="McDermott P.F."/>
            <person name="Tartera C."/>
            <person name="White D.G."/>
            <person name="Leclerc J.E."/>
            <person name="Ravel J."/>
            <person name="Cebula T.A."/>
        </authorList>
    </citation>
    <scope>NUCLEOTIDE SEQUENCE [LARGE SCALE GENOMIC DNA]</scope>
    <source>
        <strain>SL254</strain>
    </source>
</reference>
<organism>
    <name type="scientific">Salmonella newport (strain SL254)</name>
    <dbReference type="NCBI Taxonomy" id="423368"/>
    <lineage>
        <taxon>Bacteria</taxon>
        <taxon>Pseudomonadati</taxon>
        <taxon>Pseudomonadota</taxon>
        <taxon>Gammaproteobacteria</taxon>
        <taxon>Enterobacterales</taxon>
        <taxon>Enterobacteriaceae</taxon>
        <taxon>Salmonella</taxon>
    </lineage>
</organism>
<comment type="function">
    <text evidence="1">Translocates 4-amino-4-deoxy-L-arabinose-phosphoundecaprenol (alpha-L-Ara4N-phosphoundecaprenol) from the cytoplasmic to the periplasmic side of the inner membrane.</text>
</comment>
<comment type="pathway">
    <text evidence="1">Bacterial outer membrane biogenesis; lipopolysaccharide biosynthesis.</text>
</comment>
<comment type="subunit">
    <text evidence="1">Heterodimer of ArnE and ArnF.</text>
</comment>
<comment type="subcellular location">
    <subcellularLocation>
        <location evidence="1">Cell inner membrane</location>
        <topology evidence="1">Multi-pass membrane protein</topology>
    </subcellularLocation>
</comment>
<comment type="similarity">
    <text evidence="1">Belongs to the ArnE family.</text>
</comment>
<evidence type="ECO:0000255" key="1">
    <source>
        <dbReference type="HAMAP-Rule" id="MF_01869"/>
    </source>
</evidence>
<name>ARNE_SALNS</name>
<proteinExistence type="inferred from homology"/>
<keyword id="KW-0997">Cell inner membrane</keyword>
<keyword id="KW-1003">Cell membrane</keyword>
<keyword id="KW-0441">Lipid A biosynthesis</keyword>
<keyword id="KW-0444">Lipid biosynthesis</keyword>
<keyword id="KW-0443">Lipid metabolism</keyword>
<keyword id="KW-0448">Lipopolysaccharide biosynthesis</keyword>
<keyword id="KW-0472">Membrane</keyword>
<keyword id="KW-0812">Transmembrane</keyword>
<keyword id="KW-1133">Transmembrane helix</keyword>
<keyword id="KW-0813">Transport</keyword>
<protein>
    <recommendedName>
        <fullName evidence="1">Probable 4-amino-4-deoxy-L-arabinose-phosphoundecaprenol flippase subunit ArnE</fullName>
        <shortName evidence="1">L-Ara4N-phosphoundecaprenol flippase subunit ArnE</shortName>
    </recommendedName>
    <alternativeName>
        <fullName evidence="1">Undecaprenyl phosphate-aminoarabinose flippase subunit ArnE</fullName>
    </alternativeName>
</protein>
<sequence>MIGVILVLASLLSVGGQLCQKQATRPLTAGGRRRHLMLWLGLALICMGAAMVLWLLVLQTLPVGIAYPMLSLNFVWVTLAAWKIWHEQVPPRHWLGVALIISGIIILGSAA</sequence>
<dbReference type="EMBL" id="CP001113">
    <property type="protein sequence ID" value="ACF62499.1"/>
    <property type="molecule type" value="Genomic_DNA"/>
</dbReference>
<dbReference type="RefSeq" id="WP_000580578.1">
    <property type="nucleotide sequence ID" value="NZ_CCMR01000001.1"/>
</dbReference>
<dbReference type="SMR" id="B4SYX4"/>
<dbReference type="KEGG" id="see:SNSL254_A2487"/>
<dbReference type="HOGENOM" id="CLU_131462_5_1_6"/>
<dbReference type="UniPathway" id="UPA00030"/>
<dbReference type="Proteomes" id="UP000008824">
    <property type="component" value="Chromosome"/>
</dbReference>
<dbReference type="GO" id="GO:0005886">
    <property type="term" value="C:plasma membrane"/>
    <property type="evidence" value="ECO:0007669"/>
    <property type="project" value="UniProtKB-SubCell"/>
</dbReference>
<dbReference type="GO" id="GO:1901505">
    <property type="term" value="F:carbohydrate derivative transmembrane transporter activity"/>
    <property type="evidence" value="ECO:0007669"/>
    <property type="project" value="InterPro"/>
</dbReference>
<dbReference type="GO" id="GO:0009245">
    <property type="term" value="P:lipid A biosynthetic process"/>
    <property type="evidence" value="ECO:0007669"/>
    <property type="project" value="UniProtKB-UniRule"/>
</dbReference>
<dbReference type="GO" id="GO:0009103">
    <property type="term" value="P:lipopolysaccharide biosynthetic process"/>
    <property type="evidence" value="ECO:0007669"/>
    <property type="project" value="UniProtKB-UniRule"/>
</dbReference>
<dbReference type="FunFam" id="1.10.3730.20:FF:000002">
    <property type="entry name" value="Probable 4-amino-4-deoxy-L-arabinose-phosphoundecaprenol flippase subunit ArnE"/>
    <property type="match status" value="1"/>
</dbReference>
<dbReference type="Gene3D" id="1.10.3730.20">
    <property type="match status" value="1"/>
</dbReference>
<dbReference type="HAMAP" id="MF_01869">
    <property type="entry name" value="Flippase_ArnE"/>
    <property type="match status" value="1"/>
</dbReference>
<dbReference type="InterPro" id="IPR000620">
    <property type="entry name" value="EamA_dom"/>
</dbReference>
<dbReference type="InterPro" id="IPR022883">
    <property type="entry name" value="Flippase_ArnE"/>
</dbReference>
<dbReference type="InterPro" id="IPR000390">
    <property type="entry name" value="Small_drug/metabolite_transptr"/>
</dbReference>
<dbReference type="NCBIfam" id="NF011625">
    <property type="entry name" value="PRK15051.1"/>
    <property type="match status" value="1"/>
</dbReference>
<dbReference type="PANTHER" id="PTHR30561:SF23">
    <property type="entry name" value="4-AMINO-4-DEOXY-L-ARABINOSE-PHOSPHOUNDECAPRENOL FLIPPASE SUBUNIT ARNE-RELATED"/>
    <property type="match status" value="1"/>
</dbReference>
<dbReference type="PANTHER" id="PTHR30561">
    <property type="entry name" value="SMR FAMILY PROTON-DEPENDENT DRUG EFFLUX TRANSPORTER SUGE"/>
    <property type="match status" value="1"/>
</dbReference>
<dbReference type="Pfam" id="PF00892">
    <property type="entry name" value="EamA"/>
    <property type="match status" value="1"/>
</dbReference>
<dbReference type="SUPFAM" id="SSF103481">
    <property type="entry name" value="Multidrug resistance efflux transporter EmrE"/>
    <property type="match status" value="1"/>
</dbReference>